<reference key="1">
    <citation type="journal article" date="2005" name="Gene">
        <title>The first complete chloroplast genome sequence of a lycophyte, Huperzia lucidula (Lycopodiaceae).</title>
        <authorList>
            <person name="Wolf P.G."/>
            <person name="Karol K.G."/>
            <person name="Mandoli D.F."/>
            <person name="Kuehl J.V."/>
            <person name="Arumuganathan K."/>
            <person name="Ellis M.W."/>
            <person name="Mishler B.D."/>
            <person name="Kelch D.G."/>
            <person name="Olmstead R.G."/>
            <person name="Boore J.L."/>
        </authorList>
    </citation>
    <scope>NUCLEOTIDE SEQUENCE [LARGE SCALE GENOMIC DNA]</scope>
</reference>
<comment type="function">
    <text evidence="1">Component of the cytochrome b6-f complex, which mediates electron transfer between photosystem II (PSII) and photosystem I (PSI), cyclic electron flow around PSI, and state transitions. PetL is important for photoautotrophic growth as well as for electron transfer efficiency and stability of the cytochrome b6-f complex.</text>
</comment>
<comment type="subunit">
    <text evidence="1">The 4 large subunits of the cytochrome b6-f complex are cytochrome b6, subunit IV (17 kDa polypeptide, PetD), cytochrome f and the Rieske protein, while the 4 small subunits are PetG, PetL, PetM and PetN. The complex functions as a dimer.</text>
</comment>
<comment type="subcellular location">
    <subcellularLocation>
        <location evidence="1">Plastid</location>
        <location evidence="1">Chloroplast thylakoid membrane</location>
        <topology evidence="1">Single-pass membrane protein</topology>
    </subcellularLocation>
</comment>
<comment type="similarity">
    <text evidence="1">Belongs to the PetL family.</text>
</comment>
<comment type="caution">
    <text evidence="2">This is a poor transmembrane prediction.</text>
</comment>
<accession>Q5SD33</accession>
<proteinExistence type="inferred from homology"/>
<name>PETL_HUPLU</name>
<feature type="chain" id="PRO_0000233675" description="Cytochrome b6-f complex subunit 6">
    <location>
        <begin position="1"/>
        <end position="31"/>
    </location>
</feature>
<feature type="transmembrane region" description="Helical" evidence="1">
    <location>
        <begin position="7"/>
        <end position="25"/>
    </location>
</feature>
<keyword id="KW-0150">Chloroplast</keyword>
<keyword id="KW-0249">Electron transport</keyword>
<keyword id="KW-0472">Membrane</keyword>
<keyword id="KW-0602">Photosynthesis</keyword>
<keyword id="KW-0934">Plastid</keyword>
<keyword id="KW-0793">Thylakoid</keyword>
<keyword id="KW-0812">Transmembrane</keyword>
<keyword id="KW-1133">Transmembrane helix</keyword>
<keyword id="KW-0813">Transport</keyword>
<dbReference type="EMBL" id="AY660566">
    <property type="protein sequence ID" value="AAT80707.1"/>
    <property type="molecule type" value="Genomic_DNA"/>
</dbReference>
<dbReference type="RefSeq" id="YP_209511.1">
    <property type="nucleotide sequence ID" value="NC_006861.1"/>
</dbReference>
<dbReference type="GeneID" id="3283769"/>
<dbReference type="GO" id="GO:0009535">
    <property type="term" value="C:chloroplast thylakoid membrane"/>
    <property type="evidence" value="ECO:0007669"/>
    <property type="project" value="UniProtKB-SubCell"/>
</dbReference>
<dbReference type="GO" id="GO:0009512">
    <property type="term" value="C:cytochrome b6f complex"/>
    <property type="evidence" value="ECO:0007669"/>
    <property type="project" value="InterPro"/>
</dbReference>
<dbReference type="GO" id="GO:0045158">
    <property type="term" value="F:electron transporter, transferring electrons within cytochrome b6/f complex of photosystem II activity"/>
    <property type="evidence" value="ECO:0007669"/>
    <property type="project" value="UniProtKB-UniRule"/>
</dbReference>
<dbReference type="GO" id="GO:0015979">
    <property type="term" value="P:photosynthesis"/>
    <property type="evidence" value="ECO:0007669"/>
    <property type="project" value="UniProtKB-KW"/>
</dbReference>
<dbReference type="HAMAP" id="MF_00433">
    <property type="entry name" value="Cytb6_f_PetL"/>
    <property type="match status" value="1"/>
</dbReference>
<dbReference type="InterPro" id="IPR007802">
    <property type="entry name" value="Cyt_b6/f_cplx_su6"/>
</dbReference>
<organism>
    <name type="scientific">Huperzia lucidula</name>
    <name type="common">Shining clubmoss</name>
    <name type="synonym">Lycopodium lucidulum</name>
    <dbReference type="NCBI Taxonomy" id="37429"/>
    <lineage>
        <taxon>Eukaryota</taxon>
        <taxon>Viridiplantae</taxon>
        <taxon>Streptophyta</taxon>
        <taxon>Embryophyta</taxon>
        <taxon>Tracheophyta</taxon>
        <taxon>Lycopodiopsida</taxon>
        <taxon>Lycopodiales</taxon>
        <taxon>Lycopodiaceae</taxon>
        <taxon>Huperzioideae</taxon>
        <taxon>Huperzia</taxon>
    </lineage>
</organism>
<evidence type="ECO:0000255" key="1">
    <source>
        <dbReference type="HAMAP-Rule" id="MF_00433"/>
    </source>
</evidence>
<evidence type="ECO:0000305" key="2"/>
<sequence>MPIILSYSGFLLAAPIPASAPFTGLNKIRLI</sequence>
<gene>
    <name evidence="1" type="primary">petL</name>
</gene>
<geneLocation type="chloroplast"/>
<protein>
    <recommendedName>
        <fullName evidence="1">Cytochrome b6-f complex subunit 6</fullName>
    </recommendedName>
    <alternativeName>
        <fullName evidence="1">Cytochrome b6-f complex subunit PetL</fullName>
    </alternativeName>
    <alternativeName>
        <fullName evidence="1">Cytochrome b6-f complex subunit VI</fullName>
    </alternativeName>
</protein>